<gene>
    <name evidence="2" type="primary">tal</name>
    <name type="ordered locus">Spea_1074</name>
</gene>
<evidence type="ECO:0000250" key="1"/>
<evidence type="ECO:0000255" key="2">
    <source>
        <dbReference type="HAMAP-Rule" id="MF_00492"/>
    </source>
</evidence>
<dbReference type="EC" id="2.2.1.2" evidence="2"/>
<dbReference type="EMBL" id="CP000851">
    <property type="protein sequence ID" value="ABV86401.1"/>
    <property type="molecule type" value="Genomic_DNA"/>
</dbReference>
<dbReference type="RefSeq" id="WP_012154332.1">
    <property type="nucleotide sequence ID" value="NC_009901.1"/>
</dbReference>
<dbReference type="SMR" id="A8H1G4"/>
<dbReference type="STRING" id="398579.Spea_1074"/>
<dbReference type="KEGG" id="spl:Spea_1074"/>
<dbReference type="eggNOG" id="COG0176">
    <property type="taxonomic scope" value="Bacteria"/>
</dbReference>
<dbReference type="HOGENOM" id="CLU_047470_0_1_6"/>
<dbReference type="OrthoDB" id="9809101at2"/>
<dbReference type="UniPathway" id="UPA00115">
    <property type="reaction ID" value="UER00414"/>
</dbReference>
<dbReference type="Proteomes" id="UP000002608">
    <property type="component" value="Chromosome"/>
</dbReference>
<dbReference type="GO" id="GO:0005829">
    <property type="term" value="C:cytosol"/>
    <property type="evidence" value="ECO:0007669"/>
    <property type="project" value="TreeGrafter"/>
</dbReference>
<dbReference type="GO" id="GO:0004801">
    <property type="term" value="F:transaldolase activity"/>
    <property type="evidence" value="ECO:0000250"/>
    <property type="project" value="UniProtKB"/>
</dbReference>
<dbReference type="GO" id="GO:0005975">
    <property type="term" value="P:carbohydrate metabolic process"/>
    <property type="evidence" value="ECO:0007669"/>
    <property type="project" value="InterPro"/>
</dbReference>
<dbReference type="GO" id="GO:0006098">
    <property type="term" value="P:pentose-phosphate shunt"/>
    <property type="evidence" value="ECO:0007669"/>
    <property type="project" value="UniProtKB-UniRule"/>
</dbReference>
<dbReference type="CDD" id="cd00957">
    <property type="entry name" value="Transaldolase_TalAB"/>
    <property type="match status" value="1"/>
</dbReference>
<dbReference type="FunFam" id="3.20.20.70:FF:000002">
    <property type="entry name" value="Transaldolase"/>
    <property type="match status" value="1"/>
</dbReference>
<dbReference type="Gene3D" id="3.20.20.70">
    <property type="entry name" value="Aldolase class I"/>
    <property type="match status" value="1"/>
</dbReference>
<dbReference type="HAMAP" id="MF_00492">
    <property type="entry name" value="Transaldolase_1"/>
    <property type="match status" value="1"/>
</dbReference>
<dbReference type="InterPro" id="IPR013785">
    <property type="entry name" value="Aldolase_TIM"/>
</dbReference>
<dbReference type="InterPro" id="IPR001585">
    <property type="entry name" value="TAL/FSA"/>
</dbReference>
<dbReference type="InterPro" id="IPR004730">
    <property type="entry name" value="Transaldolase_1"/>
</dbReference>
<dbReference type="InterPro" id="IPR018225">
    <property type="entry name" value="Transaldolase_AS"/>
</dbReference>
<dbReference type="NCBIfam" id="NF009001">
    <property type="entry name" value="PRK12346.1"/>
    <property type="match status" value="1"/>
</dbReference>
<dbReference type="NCBIfam" id="TIGR00874">
    <property type="entry name" value="talAB"/>
    <property type="match status" value="1"/>
</dbReference>
<dbReference type="PANTHER" id="PTHR10683">
    <property type="entry name" value="TRANSALDOLASE"/>
    <property type="match status" value="1"/>
</dbReference>
<dbReference type="PANTHER" id="PTHR10683:SF18">
    <property type="entry name" value="TRANSALDOLASE"/>
    <property type="match status" value="1"/>
</dbReference>
<dbReference type="Pfam" id="PF00923">
    <property type="entry name" value="TAL_FSA"/>
    <property type="match status" value="1"/>
</dbReference>
<dbReference type="SUPFAM" id="SSF51569">
    <property type="entry name" value="Aldolase"/>
    <property type="match status" value="1"/>
</dbReference>
<dbReference type="PROSITE" id="PS01054">
    <property type="entry name" value="TRANSALDOLASE_1"/>
    <property type="match status" value="1"/>
</dbReference>
<dbReference type="PROSITE" id="PS00958">
    <property type="entry name" value="TRANSALDOLASE_2"/>
    <property type="match status" value="1"/>
</dbReference>
<reference key="1">
    <citation type="submission" date="2007-10" db="EMBL/GenBank/DDBJ databases">
        <title>Complete sequence of Shewanella pealeana ATCC 700345.</title>
        <authorList>
            <consortium name="US DOE Joint Genome Institute"/>
            <person name="Copeland A."/>
            <person name="Lucas S."/>
            <person name="Lapidus A."/>
            <person name="Barry K."/>
            <person name="Glavina del Rio T."/>
            <person name="Dalin E."/>
            <person name="Tice H."/>
            <person name="Pitluck S."/>
            <person name="Chertkov O."/>
            <person name="Brettin T."/>
            <person name="Bruce D."/>
            <person name="Detter J.C."/>
            <person name="Han C."/>
            <person name="Schmutz J."/>
            <person name="Larimer F."/>
            <person name="Land M."/>
            <person name="Hauser L."/>
            <person name="Kyrpides N."/>
            <person name="Kim E."/>
            <person name="Zhao J.-S.Z."/>
            <person name="Manno D."/>
            <person name="Hawari J."/>
            <person name="Richardson P."/>
        </authorList>
    </citation>
    <scope>NUCLEOTIDE SEQUENCE [LARGE SCALE GENOMIC DNA]</scope>
    <source>
        <strain>ATCC 700345 / ANG-SQ1</strain>
    </source>
</reference>
<protein>
    <recommendedName>
        <fullName evidence="2">Transaldolase</fullName>
        <ecNumber evidence="2">2.2.1.2</ecNumber>
    </recommendedName>
</protein>
<organism>
    <name type="scientific">Shewanella pealeana (strain ATCC 700345 / ANG-SQ1)</name>
    <dbReference type="NCBI Taxonomy" id="398579"/>
    <lineage>
        <taxon>Bacteria</taxon>
        <taxon>Pseudomonadati</taxon>
        <taxon>Pseudomonadota</taxon>
        <taxon>Gammaproteobacteria</taxon>
        <taxon>Alteromonadales</taxon>
        <taxon>Shewanellaceae</taxon>
        <taxon>Shewanella</taxon>
    </lineage>
</organism>
<proteinExistence type="inferred from homology"/>
<comment type="function">
    <text evidence="2">Transaldolase is important for the balance of metabolites in the pentose-phosphate pathway.</text>
</comment>
<comment type="catalytic activity">
    <reaction evidence="2">
        <text>D-sedoheptulose 7-phosphate + D-glyceraldehyde 3-phosphate = D-erythrose 4-phosphate + beta-D-fructose 6-phosphate</text>
        <dbReference type="Rhea" id="RHEA:17053"/>
        <dbReference type="ChEBI" id="CHEBI:16897"/>
        <dbReference type="ChEBI" id="CHEBI:57483"/>
        <dbReference type="ChEBI" id="CHEBI:57634"/>
        <dbReference type="ChEBI" id="CHEBI:59776"/>
        <dbReference type="EC" id="2.2.1.2"/>
    </reaction>
</comment>
<comment type="pathway">
    <text evidence="2">Carbohydrate degradation; pentose phosphate pathway; D-glyceraldehyde 3-phosphate and beta-D-fructose 6-phosphate from D-ribose 5-phosphate and D-xylulose 5-phosphate (non-oxidative stage): step 2/3.</text>
</comment>
<comment type="subunit">
    <text evidence="1">Homodimer.</text>
</comment>
<comment type="subcellular location">
    <subcellularLocation>
        <location evidence="2">Cytoplasm</location>
    </subcellularLocation>
</comment>
<comment type="similarity">
    <text evidence="2">Belongs to the transaldolase family. Type 1 subfamily.</text>
</comment>
<sequence>MANTLEQLKAFTTIVADTGDIEAIKRYQPEDATTNPSLILKASEIPEYSALIENAIDWAKSQSDVLAQQIEDAGDKLAVNIGLEILKIVPGRISTEVDARLSFDKEGSIAKAHKLIKLYQEAGIDKSRILIKLASTWEGICAAKQLEQEGINCNLTLLFSFAQARACAEAGVYLISPFVGRILDWYKKDTGLEYSATDDPGVVSVTSIYDYYKRHGFNTVVMGASFRNTGEIIELAGCDRLTIGPALLEELQNSTTPIVQKLLPATEVVAPEAEMTEAQFRWEFNEDPMAVEKLAEGIRNFAIDQGKLEVMLKEKLSS</sequence>
<accession>A8H1G4</accession>
<keyword id="KW-0963">Cytoplasm</keyword>
<keyword id="KW-0570">Pentose shunt</keyword>
<keyword id="KW-1185">Reference proteome</keyword>
<keyword id="KW-0704">Schiff base</keyword>
<keyword id="KW-0808">Transferase</keyword>
<name>TAL_SHEPA</name>
<feature type="chain" id="PRO_1000081400" description="Transaldolase">
    <location>
        <begin position="1"/>
        <end position="318"/>
    </location>
</feature>
<feature type="active site" description="Schiff-base intermediate with substrate" evidence="2">
    <location>
        <position position="132"/>
    </location>
</feature>